<comment type="function">
    <text evidence="1">Major role in the synthesis of nucleoside triphosphates other than ATP. The ATP gamma phosphate is transferred to the NDP beta phosphate via a ping-pong mechanism, using a phosphorylated active-site intermediate.</text>
</comment>
<comment type="catalytic activity">
    <reaction evidence="1">
        <text>a 2'-deoxyribonucleoside 5'-diphosphate + ATP = a 2'-deoxyribonucleoside 5'-triphosphate + ADP</text>
        <dbReference type="Rhea" id="RHEA:44640"/>
        <dbReference type="ChEBI" id="CHEBI:30616"/>
        <dbReference type="ChEBI" id="CHEBI:61560"/>
        <dbReference type="ChEBI" id="CHEBI:73316"/>
        <dbReference type="ChEBI" id="CHEBI:456216"/>
        <dbReference type="EC" id="2.7.4.6"/>
    </reaction>
</comment>
<comment type="catalytic activity">
    <reaction evidence="1">
        <text>a ribonucleoside 5'-diphosphate + ATP = a ribonucleoside 5'-triphosphate + ADP</text>
        <dbReference type="Rhea" id="RHEA:18113"/>
        <dbReference type="ChEBI" id="CHEBI:30616"/>
        <dbReference type="ChEBI" id="CHEBI:57930"/>
        <dbReference type="ChEBI" id="CHEBI:61557"/>
        <dbReference type="ChEBI" id="CHEBI:456216"/>
        <dbReference type="EC" id="2.7.4.6"/>
    </reaction>
</comment>
<comment type="cofactor">
    <cofactor evidence="1">
        <name>Mg(2+)</name>
        <dbReference type="ChEBI" id="CHEBI:18420"/>
    </cofactor>
</comment>
<comment type="subcellular location">
    <subcellularLocation>
        <location evidence="1">Cytoplasm</location>
    </subcellularLocation>
</comment>
<comment type="similarity">
    <text evidence="1">Belongs to the NDK family.</text>
</comment>
<sequence length="140" mass="15555">MATQKTFVMIKPDGVRRKLIGEIVGRIERKGLRIAAMKMVKIDRETANKLYEEHIGKSFFNELVSYITSGPVVCMVVEGDEAVRVMRTLIGATDPKEASPGTIRGDLALSKAENVIHASDAEEKAKREMSLFFSPNEITE</sequence>
<organism>
    <name type="scientific">Metallosphaera sedula (strain ATCC 51363 / DSM 5348 / JCM 9185 / NBRC 15509 / TH2)</name>
    <dbReference type="NCBI Taxonomy" id="399549"/>
    <lineage>
        <taxon>Archaea</taxon>
        <taxon>Thermoproteota</taxon>
        <taxon>Thermoprotei</taxon>
        <taxon>Sulfolobales</taxon>
        <taxon>Sulfolobaceae</taxon>
        <taxon>Metallosphaera</taxon>
    </lineage>
</organism>
<proteinExistence type="inferred from homology"/>
<accession>A4YCQ4</accession>
<name>NDK_METS5</name>
<feature type="chain" id="PRO_1000072364" description="Nucleoside diphosphate kinase">
    <location>
        <begin position="1"/>
        <end position="140"/>
    </location>
</feature>
<feature type="active site" description="Pros-phosphohistidine intermediate" evidence="1">
    <location>
        <position position="117"/>
    </location>
</feature>
<feature type="binding site" evidence="1">
    <location>
        <position position="11"/>
    </location>
    <ligand>
        <name>ATP</name>
        <dbReference type="ChEBI" id="CHEBI:30616"/>
    </ligand>
</feature>
<feature type="binding site" evidence="1">
    <location>
        <position position="59"/>
    </location>
    <ligand>
        <name>ATP</name>
        <dbReference type="ChEBI" id="CHEBI:30616"/>
    </ligand>
</feature>
<feature type="binding site" evidence="1">
    <location>
        <position position="87"/>
    </location>
    <ligand>
        <name>ATP</name>
        <dbReference type="ChEBI" id="CHEBI:30616"/>
    </ligand>
</feature>
<feature type="binding site" evidence="1">
    <location>
        <position position="93"/>
    </location>
    <ligand>
        <name>ATP</name>
        <dbReference type="ChEBI" id="CHEBI:30616"/>
    </ligand>
</feature>
<feature type="binding site" evidence="1">
    <location>
        <position position="104"/>
    </location>
    <ligand>
        <name>ATP</name>
        <dbReference type="ChEBI" id="CHEBI:30616"/>
    </ligand>
</feature>
<feature type="binding site" evidence="1">
    <location>
        <position position="114"/>
    </location>
    <ligand>
        <name>ATP</name>
        <dbReference type="ChEBI" id="CHEBI:30616"/>
    </ligand>
</feature>
<gene>
    <name evidence="1" type="primary">ndk</name>
    <name type="ordered locus">Msed_0029</name>
</gene>
<dbReference type="EC" id="2.7.4.6" evidence="1"/>
<dbReference type="EMBL" id="CP000682">
    <property type="protein sequence ID" value="ABP94206.1"/>
    <property type="molecule type" value="Genomic_DNA"/>
</dbReference>
<dbReference type="SMR" id="A4YCQ4"/>
<dbReference type="STRING" id="399549.Msed_0029"/>
<dbReference type="KEGG" id="mse:Msed_0029"/>
<dbReference type="eggNOG" id="arCOG04313">
    <property type="taxonomic scope" value="Archaea"/>
</dbReference>
<dbReference type="HOGENOM" id="CLU_060216_6_3_2"/>
<dbReference type="Proteomes" id="UP000000242">
    <property type="component" value="Chromosome"/>
</dbReference>
<dbReference type="GO" id="GO:0005737">
    <property type="term" value="C:cytoplasm"/>
    <property type="evidence" value="ECO:0007669"/>
    <property type="project" value="UniProtKB-SubCell"/>
</dbReference>
<dbReference type="GO" id="GO:0005524">
    <property type="term" value="F:ATP binding"/>
    <property type="evidence" value="ECO:0007669"/>
    <property type="project" value="UniProtKB-UniRule"/>
</dbReference>
<dbReference type="GO" id="GO:0046872">
    <property type="term" value="F:metal ion binding"/>
    <property type="evidence" value="ECO:0007669"/>
    <property type="project" value="UniProtKB-KW"/>
</dbReference>
<dbReference type="GO" id="GO:0004550">
    <property type="term" value="F:nucleoside diphosphate kinase activity"/>
    <property type="evidence" value="ECO:0007669"/>
    <property type="project" value="UniProtKB-UniRule"/>
</dbReference>
<dbReference type="GO" id="GO:0006241">
    <property type="term" value="P:CTP biosynthetic process"/>
    <property type="evidence" value="ECO:0007669"/>
    <property type="project" value="UniProtKB-UniRule"/>
</dbReference>
<dbReference type="GO" id="GO:0006183">
    <property type="term" value="P:GTP biosynthetic process"/>
    <property type="evidence" value="ECO:0007669"/>
    <property type="project" value="UniProtKB-UniRule"/>
</dbReference>
<dbReference type="GO" id="GO:0006228">
    <property type="term" value="P:UTP biosynthetic process"/>
    <property type="evidence" value="ECO:0007669"/>
    <property type="project" value="UniProtKB-UniRule"/>
</dbReference>
<dbReference type="CDD" id="cd04413">
    <property type="entry name" value="NDPk_I"/>
    <property type="match status" value="1"/>
</dbReference>
<dbReference type="FunFam" id="3.30.70.141:FF:000003">
    <property type="entry name" value="Nucleoside diphosphate kinase"/>
    <property type="match status" value="1"/>
</dbReference>
<dbReference type="Gene3D" id="3.30.70.141">
    <property type="entry name" value="Nucleoside diphosphate kinase-like domain"/>
    <property type="match status" value="1"/>
</dbReference>
<dbReference type="HAMAP" id="MF_00451">
    <property type="entry name" value="NDP_kinase"/>
    <property type="match status" value="1"/>
</dbReference>
<dbReference type="InterPro" id="IPR034907">
    <property type="entry name" value="NDK-like_dom"/>
</dbReference>
<dbReference type="InterPro" id="IPR036850">
    <property type="entry name" value="NDK-like_dom_sf"/>
</dbReference>
<dbReference type="InterPro" id="IPR001564">
    <property type="entry name" value="Nucleoside_diP_kinase"/>
</dbReference>
<dbReference type="InterPro" id="IPR023005">
    <property type="entry name" value="Nucleoside_diP_kinase_AS"/>
</dbReference>
<dbReference type="NCBIfam" id="NF001908">
    <property type="entry name" value="PRK00668.1"/>
    <property type="match status" value="1"/>
</dbReference>
<dbReference type="PANTHER" id="PTHR11349">
    <property type="entry name" value="NUCLEOSIDE DIPHOSPHATE KINASE"/>
    <property type="match status" value="1"/>
</dbReference>
<dbReference type="Pfam" id="PF00334">
    <property type="entry name" value="NDK"/>
    <property type="match status" value="1"/>
</dbReference>
<dbReference type="PRINTS" id="PR01243">
    <property type="entry name" value="NUCDPKINASE"/>
</dbReference>
<dbReference type="SMART" id="SM00562">
    <property type="entry name" value="NDK"/>
    <property type="match status" value="1"/>
</dbReference>
<dbReference type="SUPFAM" id="SSF54919">
    <property type="entry name" value="Nucleoside diphosphate kinase, NDK"/>
    <property type="match status" value="1"/>
</dbReference>
<dbReference type="PROSITE" id="PS00469">
    <property type="entry name" value="NDPK"/>
    <property type="match status" value="1"/>
</dbReference>
<dbReference type="PROSITE" id="PS51374">
    <property type="entry name" value="NDPK_LIKE"/>
    <property type="match status" value="1"/>
</dbReference>
<evidence type="ECO:0000255" key="1">
    <source>
        <dbReference type="HAMAP-Rule" id="MF_00451"/>
    </source>
</evidence>
<reference key="1">
    <citation type="journal article" date="2008" name="Appl. Environ. Microbiol.">
        <title>The genome sequence of the metal-mobilizing, extremely thermoacidophilic archaeon Metallosphaera sedula provides insights into bioleaching-associated metabolism.</title>
        <authorList>
            <person name="Auernik K.S."/>
            <person name="Maezato Y."/>
            <person name="Blum P.H."/>
            <person name="Kelly R.M."/>
        </authorList>
    </citation>
    <scope>NUCLEOTIDE SEQUENCE [LARGE SCALE GENOMIC DNA]</scope>
    <source>
        <strain>ATCC 51363 / DSM 5348 / JCM 9185 / NBRC 15509 / TH2</strain>
    </source>
</reference>
<keyword id="KW-0067">ATP-binding</keyword>
<keyword id="KW-0963">Cytoplasm</keyword>
<keyword id="KW-0418">Kinase</keyword>
<keyword id="KW-0460">Magnesium</keyword>
<keyword id="KW-0479">Metal-binding</keyword>
<keyword id="KW-0546">Nucleotide metabolism</keyword>
<keyword id="KW-0547">Nucleotide-binding</keyword>
<keyword id="KW-0597">Phosphoprotein</keyword>
<keyword id="KW-1185">Reference proteome</keyword>
<keyword id="KW-0808">Transferase</keyword>
<protein>
    <recommendedName>
        <fullName evidence="1">Nucleoside diphosphate kinase</fullName>
        <shortName evidence="1">NDK</shortName>
        <shortName evidence="1">NDP kinase</shortName>
        <ecNumber evidence="1">2.7.4.6</ecNumber>
    </recommendedName>
    <alternativeName>
        <fullName evidence="1">Nucleoside-2-P kinase</fullName>
    </alternativeName>
</protein>